<proteinExistence type="inferred from homology"/>
<gene>
    <name type="primary">PCDHA5</name>
</gene>
<reference key="1">
    <citation type="journal article" date="2005" name="Nature">
        <title>Initial sequence of the chimpanzee genome and comparison with the human genome.</title>
        <authorList>
            <consortium name="Chimpanzee sequencing and analysis consortium"/>
        </authorList>
    </citation>
    <scope>NUCLEOTIDE SEQUENCE [LARGE SCALE GENOMIC DNA]</scope>
</reference>
<reference key="2">
    <citation type="journal article" date="2005" name="Genetics">
        <title>Comparative genomics and diversifying selection of the clustered vertebrate protocadherin genes.</title>
        <authorList>
            <person name="Wu Q."/>
        </authorList>
    </citation>
    <scope>IDENTIFICATION</scope>
</reference>
<name>PCDA5_PANTR</name>
<sequence>MVYSRRGSLGSRLLLLWLLLAYWKAGSGQLHYSIPEEAKHGTFVGRIAQDLGLELAELVPRLFRVASKGRGDLLEVNLQNGILFVNSRIDREELCRRRAECSIHLEVIVDRPLQVFHVEVAVKDINDNPPRFSRQEQTLFILESRMPDSRFPLEGASDLDIGANAQLRYRLNPNEYFDLDVKTNEEETNFLELVLRKSLDREETQEHRLLVIATDGGKPELTGTVQLLINVLDANDNAPEFDKSIYNVRLLENAPSGTLVIKLNASDADEGINKEIVYFFSNLVLDDVKSKFIINSNTGEIKVNGELDYEDCNSYEINIDAVDKSTFPLSGHCKVVVKLLDVNDNTPEMAITTLFLPVKEDAPLSTVIALITVSDRDSGANGPVTCSLMPHVPFKLVSTFKNYYSLVLDSALDRESLSVYELVVTARDGGSPSLWATASVSVEVADVNDTLRAFAQPQYTVFVKENNPPGCHIFTVSARDADAQENALVSYSLVERRVGERPLSSYVSVHAESGKVYALQPLDHEEVELLQFQVSARDAGVPPLGSNVTLQVFVLDENDNAPALLAPRVGGTGGAVSELVPRSVGAGHVVAKVRAVDPDSGYNAWLSYELQPAPGSARIPFRVGLYTGEISTTRSLDETEAPRHRLLVLVKDHGEPPLTATATVLVSLVESGQAPKASSRASAGAVGPEAALVDVNVYLIIAICAVSSLLVLTLLLYTALRCSAQPTEAVCTRGKPTLVCSSAVGSWSYSQQRRQRVCSGEAPPKTDLMAFSPSLPQGPTSTDNPRQPNPDWRYSASLRAGMHSSVHLEEAGILRAGPGGPDQQWPTVSSATPEPEAGEVSPPVGAGVNSNSWTFKYGPGNPKQSGPGELPDKFIIPGSPAIISIRQEPANSQIDKSDFITFGKKEETKKKKKKKKGNKTQEKKEKGNSTTDNSDQ</sequence>
<dbReference type="SMR" id="Q5DRE7"/>
<dbReference type="FunCoup" id="Q5DRE7">
    <property type="interactions" value="18"/>
</dbReference>
<dbReference type="GlyCosmos" id="Q5DRE7">
    <property type="glycosylation" value="3 sites, No reported glycans"/>
</dbReference>
<dbReference type="PaxDb" id="9598-ENSPTRP00000058286"/>
<dbReference type="eggNOG" id="KOG3594">
    <property type="taxonomic scope" value="Eukaryota"/>
</dbReference>
<dbReference type="InParanoid" id="Q5DRE7"/>
<dbReference type="Proteomes" id="UP000002277">
    <property type="component" value="Unplaced"/>
</dbReference>
<dbReference type="GO" id="GO:0005886">
    <property type="term" value="C:plasma membrane"/>
    <property type="evidence" value="ECO:0000318"/>
    <property type="project" value="GO_Central"/>
</dbReference>
<dbReference type="GO" id="GO:0005509">
    <property type="term" value="F:calcium ion binding"/>
    <property type="evidence" value="ECO:0007669"/>
    <property type="project" value="InterPro"/>
</dbReference>
<dbReference type="GO" id="GO:0007155">
    <property type="term" value="P:cell adhesion"/>
    <property type="evidence" value="ECO:0000318"/>
    <property type="project" value="GO_Central"/>
</dbReference>
<dbReference type="GO" id="GO:0007156">
    <property type="term" value="P:homophilic cell adhesion via plasma membrane adhesion molecules"/>
    <property type="evidence" value="ECO:0007669"/>
    <property type="project" value="InterPro"/>
</dbReference>
<dbReference type="GO" id="GO:0007399">
    <property type="term" value="P:nervous system development"/>
    <property type="evidence" value="ECO:0007669"/>
    <property type="project" value="UniProtKB-ARBA"/>
</dbReference>
<dbReference type="CDD" id="cd11304">
    <property type="entry name" value="Cadherin_repeat"/>
    <property type="match status" value="6"/>
</dbReference>
<dbReference type="FunFam" id="2.60.40.60:FF:000001">
    <property type="entry name" value="Protocadherin alpha 2"/>
    <property type="match status" value="1"/>
</dbReference>
<dbReference type="FunFam" id="2.60.40.60:FF:000002">
    <property type="entry name" value="Protocadherin alpha 2"/>
    <property type="match status" value="1"/>
</dbReference>
<dbReference type="FunFam" id="2.60.40.60:FF:000003">
    <property type="entry name" value="Protocadherin alpha 2"/>
    <property type="match status" value="1"/>
</dbReference>
<dbReference type="FunFam" id="2.60.40.60:FF:000006">
    <property type="entry name" value="Protocadherin alpha 2"/>
    <property type="match status" value="1"/>
</dbReference>
<dbReference type="FunFam" id="2.60.40.60:FF:000007">
    <property type="entry name" value="Protocadherin alpha 2"/>
    <property type="match status" value="1"/>
</dbReference>
<dbReference type="FunFam" id="2.60.40.60:FF:000076">
    <property type="entry name" value="Protocadherin alpha 2"/>
    <property type="match status" value="1"/>
</dbReference>
<dbReference type="Gene3D" id="2.60.40.60">
    <property type="entry name" value="Cadherins"/>
    <property type="match status" value="6"/>
</dbReference>
<dbReference type="InterPro" id="IPR002126">
    <property type="entry name" value="Cadherin-like_dom"/>
</dbReference>
<dbReference type="InterPro" id="IPR015919">
    <property type="entry name" value="Cadherin-like_sf"/>
</dbReference>
<dbReference type="InterPro" id="IPR031904">
    <property type="entry name" value="Cadherin_CBD"/>
</dbReference>
<dbReference type="InterPro" id="IPR020894">
    <property type="entry name" value="Cadherin_CS"/>
</dbReference>
<dbReference type="InterPro" id="IPR013164">
    <property type="entry name" value="Cadherin_N"/>
</dbReference>
<dbReference type="InterPro" id="IPR050174">
    <property type="entry name" value="Protocadherin/Cadherin-CA"/>
</dbReference>
<dbReference type="PANTHER" id="PTHR24028">
    <property type="entry name" value="CADHERIN-87A"/>
    <property type="match status" value="1"/>
</dbReference>
<dbReference type="PANTHER" id="PTHR24028:SF111">
    <property type="entry name" value="PROTOCADHERIN ALPHA-5"/>
    <property type="match status" value="1"/>
</dbReference>
<dbReference type="Pfam" id="PF00028">
    <property type="entry name" value="Cadherin"/>
    <property type="match status" value="5"/>
</dbReference>
<dbReference type="Pfam" id="PF08266">
    <property type="entry name" value="Cadherin_2"/>
    <property type="match status" value="1"/>
</dbReference>
<dbReference type="Pfam" id="PF15974">
    <property type="entry name" value="Cadherin_tail"/>
    <property type="match status" value="1"/>
</dbReference>
<dbReference type="PRINTS" id="PR00205">
    <property type="entry name" value="CADHERIN"/>
</dbReference>
<dbReference type="SMART" id="SM00112">
    <property type="entry name" value="CA"/>
    <property type="match status" value="6"/>
</dbReference>
<dbReference type="SUPFAM" id="SSF49313">
    <property type="entry name" value="Cadherin-like"/>
    <property type="match status" value="6"/>
</dbReference>
<dbReference type="PROSITE" id="PS00232">
    <property type="entry name" value="CADHERIN_1"/>
    <property type="match status" value="4"/>
</dbReference>
<dbReference type="PROSITE" id="PS50268">
    <property type="entry name" value="CADHERIN_2"/>
    <property type="match status" value="6"/>
</dbReference>
<keyword id="KW-0106">Calcium</keyword>
<keyword id="KW-0130">Cell adhesion</keyword>
<keyword id="KW-1003">Cell membrane</keyword>
<keyword id="KW-0325">Glycoprotein</keyword>
<keyword id="KW-0472">Membrane</keyword>
<keyword id="KW-1185">Reference proteome</keyword>
<keyword id="KW-0677">Repeat</keyword>
<keyword id="KW-0732">Signal</keyword>
<keyword id="KW-0812">Transmembrane</keyword>
<keyword id="KW-1133">Transmembrane helix</keyword>
<feature type="signal peptide" evidence="2">
    <location>
        <begin position="1"/>
        <end position="28"/>
    </location>
</feature>
<feature type="chain" id="PRO_0000003893" description="Protocadherin alpha-5">
    <location>
        <begin position="29"/>
        <end position="936"/>
    </location>
</feature>
<feature type="topological domain" description="Extracellular" evidence="2">
    <location>
        <begin position="29"/>
        <end position="696"/>
    </location>
</feature>
<feature type="transmembrane region" description="Helical" evidence="2">
    <location>
        <begin position="697"/>
        <end position="717"/>
    </location>
</feature>
<feature type="topological domain" description="Cytoplasmic" evidence="2">
    <location>
        <begin position="718"/>
        <end position="936"/>
    </location>
</feature>
<feature type="domain" description="Cadherin 1" evidence="3">
    <location>
        <begin position="33"/>
        <end position="132"/>
    </location>
</feature>
<feature type="domain" description="Cadherin 2" evidence="3">
    <location>
        <begin position="156"/>
        <end position="241"/>
    </location>
</feature>
<feature type="domain" description="Cadherin 3" evidence="3">
    <location>
        <begin position="242"/>
        <end position="349"/>
    </location>
</feature>
<feature type="domain" description="Cadherin 4" evidence="3">
    <location>
        <begin position="350"/>
        <end position="454"/>
    </location>
</feature>
<feature type="domain" description="Cadherin 5" evidence="3">
    <location>
        <begin position="455"/>
        <end position="564"/>
    </location>
</feature>
<feature type="domain" description="Cadherin 6" evidence="3">
    <location>
        <begin position="580"/>
        <end position="677"/>
    </location>
</feature>
<feature type="repeat" description="PXXP 1">
    <location>
        <begin position="773"/>
        <end position="776"/>
    </location>
</feature>
<feature type="repeat" description="PXXP 2">
    <location>
        <begin position="785"/>
        <end position="788"/>
    </location>
</feature>
<feature type="repeat" description="PXXP 3">
    <location>
        <begin position="818"/>
        <end position="821"/>
    </location>
</feature>
<feature type="repeat" description="PXXP 4">
    <location>
        <begin position="873"/>
        <end position="876"/>
    </location>
</feature>
<feature type="repeat" description="PXXP 5">
    <location>
        <begin position="877"/>
        <end position="890"/>
    </location>
</feature>
<feature type="region of interest" description="Disordered" evidence="4">
    <location>
        <begin position="759"/>
        <end position="793"/>
    </location>
</feature>
<feature type="region of interest" description="5 X 4 AA repeats of P-X-X-P">
    <location>
        <begin position="773"/>
        <end position="890"/>
    </location>
</feature>
<feature type="region of interest" description="Disordered" evidence="4">
    <location>
        <begin position="815"/>
        <end position="875"/>
    </location>
</feature>
<feature type="region of interest" description="Disordered" evidence="4">
    <location>
        <begin position="887"/>
        <end position="936"/>
    </location>
</feature>
<feature type="compositionally biased region" description="Polar residues" evidence="4">
    <location>
        <begin position="774"/>
        <end position="786"/>
    </location>
</feature>
<feature type="compositionally biased region" description="Basic and acidic residues" evidence="4">
    <location>
        <begin position="895"/>
        <end position="909"/>
    </location>
</feature>
<feature type="glycosylation site" description="N-linked (GlcNAc...) asparagine" evidence="2">
    <location>
        <position position="264"/>
    </location>
</feature>
<feature type="glycosylation site" description="N-linked (GlcNAc...) asparagine" evidence="2">
    <location>
        <position position="448"/>
    </location>
</feature>
<feature type="glycosylation site" description="N-linked (GlcNAc...) asparagine" evidence="2">
    <location>
        <position position="547"/>
    </location>
</feature>
<protein>
    <recommendedName>
        <fullName>Protocadherin alpha-5</fullName>
        <shortName>PCDH-alpha-5</shortName>
    </recommendedName>
</protein>
<comment type="function">
    <text>Potential calcium-dependent cell-adhesion protein. May be involved in the establishment and maintenance of specific neuronal connections in the brain.</text>
</comment>
<comment type="subcellular location">
    <subcellularLocation>
        <location evidence="1">Cell membrane</location>
        <topology evidence="1">Single-pass type I membrane protein</topology>
    </subcellularLocation>
</comment>
<evidence type="ECO:0000250" key="1"/>
<evidence type="ECO:0000255" key="2"/>
<evidence type="ECO:0000255" key="3">
    <source>
        <dbReference type="PROSITE-ProRule" id="PRU00043"/>
    </source>
</evidence>
<evidence type="ECO:0000256" key="4">
    <source>
        <dbReference type="SAM" id="MobiDB-lite"/>
    </source>
</evidence>
<organism>
    <name type="scientific">Pan troglodytes</name>
    <name type="common">Chimpanzee</name>
    <dbReference type="NCBI Taxonomy" id="9598"/>
    <lineage>
        <taxon>Eukaryota</taxon>
        <taxon>Metazoa</taxon>
        <taxon>Chordata</taxon>
        <taxon>Craniata</taxon>
        <taxon>Vertebrata</taxon>
        <taxon>Euteleostomi</taxon>
        <taxon>Mammalia</taxon>
        <taxon>Eutheria</taxon>
        <taxon>Euarchontoglires</taxon>
        <taxon>Primates</taxon>
        <taxon>Haplorrhini</taxon>
        <taxon>Catarrhini</taxon>
        <taxon>Hominidae</taxon>
        <taxon>Pan</taxon>
    </lineage>
</organism>
<accession>Q5DRE7</accession>